<protein>
    <recommendedName>
        <fullName evidence="1">Large ribosomal subunit protein bL31B</fullName>
    </recommendedName>
    <alternativeName>
        <fullName evidence="2">50S ribosomal protein L31 type B</fullName>
    </alternativeName>
</protein>
<comment type="subunit">
    <text evidence="1">Part of the 50S ribosomal subunit.</text>
</comment>
<comment type="similarity">
    <text evidence="1">Belongs to the bacterial ribosomal protein bL31 family. Type B subfamily.</text>
</comment>
<feature type="chain" id="PRO_1000206532" description="Large ribosomal subunit protein bL31B">
    <location>
        <begin position="1"/>
        <end position="81"/>
    </location>
</feature>
<sequence length="81" mass="9258">MKTGIHPEYRPVVFVDTSTDFKFLSGSTKSSSETIKWEDGNEYPLLRVEISSDSHPFYTGKQKHATADGRVDRFNKKYGLK</sequence>
<accession>C1KYW5</accession>
<reference key="1">
    <citation type="journal article" date="2012" name="BMC Genomics">
        <title>Comparative genomics and transcriptomics of lineages I, II, and III strains of Listeria monocytogenes.</title>
        <authorList>
            <person name="Hain T."/>
            <person name="Ghai R."/>
            <person name="Billion A."/>
            <person name="Kuenne C.T."/>
            <person name="Steinweg C."/>
            <person name="Izar B."/>
            <person name="Mohamed W."/>
            <person name="Mraheil M."/>
            <person name="Domann E."/>
            <person name="Schaffrath S."/>
            <person name="Karst U."/>
            <person name="Goesmann A."/>
            <person name="Oehm S."/>
            <person name="Puhler A."/>
            <person name="Merkl R."/>
            <person name="Vorwerk S."/>
            <person name="Glaser P."/>
            <person name="Garrido P."/>
            <person name="Rusniok C."/>
            <person name="Buchrieser C."/>
            <person name="Goebel W."/>
            <person name="Chakraborty T."/>
        </authorList>
    </citation>
    <scope>NUCLEOTIDE SEQUENCE [LARGE SCALE GENOMIC DNA]</scope>
    <source>
        <strain>CLIP80459</strain>
    </source>
</reference>
<organism>
    <name type="scientific">Listeria monocytogenes serotype 4b (strain CLIP80459)</name>
    <dbReference type="NCBI Taxonomy" id="568819"/>
    <lineage>
        <taxon>Bacteria</taxon>
        <taxon>Bacillati</taxon>
        <taxon>Bacillota</taxon>
        <taxon>Bacilli</taxon>
        <taxon>Bacillales</taxon>
        <taxon>Listeriaceae</taxon>
        <taxon>Listeria</taxon>
    </lineage>
</organism>
<evidence type="ECO:0000255" key="1">
    <source>
        <dbReference type="HAMAP-Rule" id="MF_00502"/>
    </source>
</evidence>
<evidence type="ECO:0000305" key="2"/>
<proteinExistence type="inferred from homology"/>
<dbReference type="EMBL" id="FM242711">
    <property type="protein sequence ID" value="CAS06272.1"/>
    <property type="molecule type" value="Genomic_DNA"/>
</dbReference>
<dbReference type="RefSeq" id="WP_003726356.1">
    <property type="nucleotide sequence ID" value="NC_012488.1"/>
</dbReference>
<dbReference type="SMR" id="C1KYW5"/>
<dbReference type="KEGG" id="lmc:Lm4b_02517"/>
<dbReference type="HOGENOM" id="CLU_114306_2_2_9"/>
<dbReference type="GO" id="GO:1990904">
    <property type="term" value="C:ribonucleoprotein complex"/>
    <property type="evidence" value="ECO:0007669"/>
    <property type="project" value="UniProtKB-KW"/>
</dbReference>
<dbReference type="GO" id="GO:0005840">
    <property type="term" value="C:ribosome"/>
    <property type="evidence" value="ECO:0007669"/>
    <property type="project" value="UniProtKB-KW"/>
</dbReference>
<dbReference type="GO" id="GO:0003735">
    <property type="term" value="F:structural constituent of ribosome"/>
    <property type="evidence" value="ECO:0007669"/>
    <property type="project" value="InterPro"/>
</dbReference>
<dbReference type="GO" id="GO:0006412">
    <property type="term" value="P:translation"/>
    <property type="evidence" value="ECO:0007669"/>
    <property type="project" value="UniProtKB-UniRule"/>
</dbReference>
<dbReference type="Gene3D" id="4.10.830.30">
    <property type="entry name" value="Ribosomal protein L31"/>
    <property type="match status" value="1"/>
</dbReference>
<dbReference type="HAMAP" id="MF_00502">
    <property type="entry name" value="Ribosomal_bL31_2"/>
    <property type="match status" value="1"/>
</dbReference>
<dbReference type="InterPro" id="IPR034704">
    <property type="entry name" value="Ribosomal_bL28/bL31-like_sf"/>
</dbReference>
<dbReference type="InterPro" id="IPR002150">
    <property type="entry name" value="Ribosomal_bL31"/>
</dbReference>
<dbReference type="InterPro" id="IPR027493">
    <property type="entry name" value="Ribosomal_bL31_B"/>
</dbReference>
<dbReference type="InterPro" id="IPR042105">
    <property type="entry name" value="Ribosomal_bL31_sf"/>
</dbReference>
<dbReference type="NCBIfam" id="TIGR00105">
    <property type="entry name" value="L31"/>
    <property type="match status" value="1"/>
</dbReference>
<dbReference type="NCBIfam" id="NF002462">
    <property type="entry name" value="PRK01678.1"/>
    <property type="match status" value="1"/>
</dbReference>
<dbReference type="PANTHER" id="PTHR33280">
    <property type="entry name" value="50S RIBOSOMAL PROTEIN L31, CHLOROPLASTIC"/>
    <property type="match status" value="1"/>
</dbReference>
<dbReference type="PANTHER" id="PTHR33280:SF1">
    <property type="entry name" value="LARGE RIBOSOMAL SUBUNIT PROTEIN BL31C"/>
    <property type="match status" value="1"/>
</dbReference>
<dbReference type="Pfam" id="PF01197">
    <property type="entry name" value="Ribosomal_L31"/>
    <property type="match status" value="1"/>
</dbReference>
<dbReference type="PRINTS" id="PR01249">
    <property type="entry name" value="RIBOSOMALL31"/>
</dbReference>
<dbReference type="SUPFAM" id="SSF143800">
    <property type="entry name" value="L28p-like"/>
    <property type="match status" value="1"/>
</dbReference>
<dbReference type="PROSITE" id="PS01143">
    <property type="entry name" value="RIBOSOMAL_L31"/>
    <property type="match status" value="1"/>
</dbReference>
<gene>
    <name evidence="1" type="primary">rpmE2</name>
    <name type="ordered locus">Lm4b_02517</name>
</gene>
<name>RL31B_LISMC</name>
<keyword id="KW-0687">Ribonucleoprotein</keyword>
<keyword id="KW-0689">Ribosomal protein</keyword>